<reference key="1">
    <citation type="submission" date="2008-03" db="EMBL/GenBank/DDBJ databases">
        <title>Complete sequence of Leptothrix cholodnii SP-6.</title>
        <authorList>
            <consortium name="US DOE Joint Genome Institute"/>
            <person name="Copeland A."/>
            <person name="Lucas S."/>
            <person name="Lapidus A."/>
            <person name="Glavina del Rio T."/>
            <person name="Dalin E."/>
            <person name="Tice H."/>
            <person name="Bruce D."/>
            <person name="Goodwin L."/>
            <person name="Pitluck S."/>
            <person name="Chertkov O."/>
            <person name="Brettin T."/>
            <person name="Detter J.C."/>
            <person name="Han C."/>
            <person name="Kuske C.R."/>
            <person name="Schmutz J."/>
            <person name="Larimer F."/>
            <person name="Land M."/>
            <person name="Hauser L."/>
            <person name="Kyrpides N."/>
            <person name="Lykidis A."/>
            <person name="Emerson D."/>
            <person name="Richardson P."/>
        </authorList>
    </citation>
    <scope>NUCLEOTIDE SEQUENCE [LARGE SCALE GENOMIC DNA]</scope>
    <source>
        <strain>ATCC 51168 / LMG 8142 / SP-6</strain>
    </source>
</reference>
<feature type="chain" id="PRO_1000132587" description="Adenosylcobinamide-GDP ribazoletransferase">
    <location>
        <begin position="1"/>
        <end position="264"/>
    </location>
</feature>
<feature type="transmembrane region" description="Helical" evidence="1">
    <location>
        <begin position="10"/>
        <end position="30"/>
    </location>
</feature>
<feature type="transmembrane region" description="Helical" evidence="1">
    <location>
        <begin position="43"/>
        <end position="63"/>
    </location>
</feature>
<feature type="transmembrane region" description="Helical" evidence="1">
    <location>
        <begin position="113"/>
        <end position="133"/>
    </location>
</feature>
<feature type="transmembrane region" description="Helical" evidence="1">
    <location>
        <begin position="141"/>
        <end position="161"/>
    </location>
</feature>
<feature type="transmembrane region" description="Helical" evidence="1">
    <location>
        <begin position="183"/>
        <end position="203"/>
    </location>
</feature>
<feature type="transmembrane region" description="Helical" evidence="1">
    <location>
        <begin position="205"/>
        <end position="225"/>
    </location>
</feature>
<feature type="transmembrane region" description="Helical" evidence="1">
    <location>
        <begin position="243"/>
        <end position="263"/>
    </location>
</feature>
<protein>
    <recommendedName>
        <fullName evidence="1">Adenosylcobinamide-GDP ribazoletransferase</fullName>
        <ecNumber evidence="1">2.7.8.26</ecNumber>
    </recommendedName>
    <alternativeName>
        <fullName evidence="1">Cobalamin synthase</fullName>
    </alternativeName>
    <alternativeName>
        <fullName evidence="1">Cobalamin-5'-phosphate synthase</fullName>
    </alternativeName>
</protein>
<comment type="function">
    <text evidence="1">Joins adenosylcobinamide-GDP and alpha-ribazole to generate adenosylcobalamin (Ado-cobalamin). Also synthesizes adenosylcobalamin 5'-phosphate from adenosylcobinamide-GDP and alpha-ribazole 5'-phosphate.</text>
</comment>
<comment type="catalytic activity">
    <reaction evidence="1">
        <text>alpha-ribazole + adenosylcob(III)inamide-GDP = adenosylcob(III)alamin + GMP + H(+)</text>
        <dbReference type="Rhea" id="RHEA:16049"/>
        <dbReference type="ChEBI" id="CHEBI:10329"/>
        <dbReference type="ChEBI" id="CHEBI:15378"/>
        <dbReference type="ChEBI" id="CHEBI:18408"/>
        <dbReference type="ChEBI" id="CHEBI:58115"/>
        <dbReference type="ChEBI" id="CHEBI:60487"/>
        <dbReference type="EC" id="2.7.8.26"/>
    </reaction>
</comment>
<comment type="catalytic activity">
    <reaction evidence="1">
        <text>alpha-ribazole 5'-phosphate + adenosylcob(III)inamide-GDP = adenosylcob(III)alamin 5'-phosphate + GMP + H(+)</text>
        <dbReference type="Rhea" id="RHEA:23560"/>
        <dbReference type="ChEBI" id="CHEBI:15378"/>
        <dbReference type="ChEBI" id="CHEBI:57918"/>
        <dbReference type="ChEBI" id="CHEBI:58115"/>
        <dbReference type="ChEBI" id="CHEBI:60487"/>
        <dbReference type="ChEBI" id="CHEBI:60493"/>
        <dbReference type="EC" id="2.7.8.26"/>
    </reaction>
</comment>
<comment type="cofactor">
    <cofactor evidence="1">
        <name>Mg(2+)</name>
        <dbReference type="ChEBI" id="CHEBI:18420"/>
    </cofactor>
</comment>
<comment type="pathway">
    <text evidence="1">Cofactor biosynthesis; adenosylcobalamin biosynthesis; adenosylcobalamin from cob(II)yrinate a,c-diamide: step 7/7.</text>
</comment>
<comment type="subcellular location">
    <subcellularLocation>
        <location evidence="1">Cell inner membrane</location>
        <topology evidence="1">Multi-pass membrane protein</topology>
    </subcellularLocation>
</comment>
<comment type="similarity">
    <text evidence="1">Belongs to the CobS family.</text>
</comment>
<keyword id="KW-0997">Cell inner membrane</keyword>
<keyword id="KW-1003">Cell membrane</keyword>
<keyword id="KW-0169">Cobalamin biosynthesis</keyword>
<keyword id="KW-0460">Magnesium</keyword>
<keyword id="KW-0472">Membrane</keyword>
<keyword id="KW-1185">Reference proteome</keyword>
<keyword id="KW-0808">Transferase</keyword>
<keyword id="KW-0812">Transmembrane</keyword>
<keyword id="KW-1133">Transmembrane helix</keyword>
<dbReference type="EC" id="2.7.8.26" evidence="1"/>
<dbReference type="EMBL" id="CP001013">
    <property type="protein sequence ID" value="ACB34924.1"/>
    <property type="molecule type" value="Genomic_DNA"/>
</dbReference>
<dbReference type="RefSeq" id="WP_012347680.1">
    <property type="nucleotide sequence ID" value="NC_010524.1"/>
</dbReference>
<dbReference type="STRING" id="395495.Lcho_2659"/>
<dbReference type="KEGG" id="lch:Lcho_2659"/>
<dbReference type="eggNOG" id="COG0368">
    <property type="taxonomic scope" value="Bacteria"/>
</dbReference>
<dbReference type="HOGENOM" id="CLU_057426_1_1_4"/>
<dbReference type="OrthoDB" id="9794626at2"/>
<dbReference type="UniPathway" id="UPA00148">
    <property type="reaction ID" value="UER00238"/>
</dbReference>
<dbReference type="Proteomes" id="UP000001693">
    <property type="component" value="Chromosome"/>
</dbReference>
<dbReference type="GO" id="GO:0005886">
    <property type="term" value="C:plasma membrane"/>
    <property type="evidence" value="ECO:0007669"/>
    <property type="project" value="UniProtKB-SubCell"/>
</dbReference>
<dbReference type="GO" id="GO:0051073">
    <property type="term" value="F:adenosylcobinamide-GDP ribazoletransferase activity"/>
    <property type="evidence" value="ECO:0007669"/>
    <property type="project" value="UniProtKB-UniRule"/>
</dbReference>
<dbReference type="GO" id="GO:0008818">
    <property type="term" value="F:cobalamin 5'-phosphate synthase activity"/>
    <property type="evidence" value="ECO:0007669"/>
    <property type="project" value="UniProtKB-UniRule"/>
</dbReference>
<dbReference type="GO" id="GO:0009236">
    <property type="term" value="P:cobalamin biosynthetic process"/>
    <property type="evidence" value="ECO:0007669"/>
    <property type="project" value="UniProtKB-UniRule"/>
</dbReference>
<dbReference type="HAMAP" id="MF_00719">
    <property type="entry name" value="CobS"/>
    <property type="match status" value="1"/>
</dbReference>
<dbReference type="InterPro" id="IPR003805">
    <property type="entry name" value="CobS"/>
</dbReference>
<dbReference type="NCBIfam" id="TIGR00317">
    <property type="entry name" value="cobS"/>
    <property type="match status" value="1"/>
</dbReference>
<dbReference type="NCBIfam" id="NF001277">
    <property type="entry name" value="PRK00235.1-3"/>
    <property type="match status" value="1"/>
</dbReference>
<dbReference type="PANTHER" id="PTHR34148">
    <property type="entry name" value="ADENOSYLCOBINAMIDE-GDP RIBAZOLETRANSFERASE"/>
    <property type="match status" value="1"/>
</dbReference>
<dbReference type="PANTHER" id="PTHR34148:SF1">
    <property type="entry name" value="ADENOSYLCOBINAMIDE-GDP RIBAZOLETRANSFERASE"/>
    <property type="match status" value="1"/>
</dbReference>
<dbReference type="Pfam" id="PF02654">
    <property type="entry name" value="CobS"/>
    <property type="match status" value="1"/>
</dbReference>
<name>COBS_LEPCP</name>
<sequence>MAALIHEARLFFIALQFFTRVPVPAWVGYTPEWMHASARHYPLVGAWVGGVAALVLWLAAQVWPLSVAVGLSMAATVWLTGGFHEDGLADTCDGLGGSVSRERALTIMKDSRLGSYGALGLVGVLGLKAVALYELTDFDGVQALIALVWAHAVSRAVPVALLRLLPYAGDAEHAKAKPMAQQVSDAGLAAALGWAALACAAAWGLGASAFTLACAALGVIALAAFCVRWYRQRLGGYTGDTLGAAQQLCELAAYLGWLAGVWFE</sequence>
<accession>B1Y854</accession>
<proteinExistence type="inferred from homology"/>
<gene>
    <name evidence="1" type="primary">cobS</name>
    <name type="ordered locus">Lcho_2659</name>
</gene>
<evidence type="ECO:0000255" key="1">
    <source>
        <dbReference type="HAMAP-Rule" id="MF_00719"/>
    </source>
</evidence>
<organism>
    <name type="scientific">Leptothrix cholodnii (strain ATCC 51168 / LMG 8142 / SP-6)</name>
    <name type="common">Leptothrix discophora (strain SP-6)</name>
    <dbReference type="NCBI Taxonomy" id="395495"/>
    <lineage>
        <taxon>Bacteria</taxon>
        <taxon>Pseudomonadati</taxon>
        <taxon>Pseudomonadota</taxon>
        <taxon>Betaproteobacteria</taxon>
        <taxon>Burkholderiales</taxon>
        <taxon>Sphaerotilaceae</taxon>
        <taxon>Leptothrix</taxon>
    </lineage>
</organism>